<accession>P30199</accession>
<sequence length="461" mass="51814">MNKFKFFIVFLILSLVFLQNEYAFGSSLNEELSYYSVEYDNAKTFKESIKQKNIELTYKIPELHTAQIKTSKSKLNSLIKSNKNVKFVNPTCSTCVVEKSVKTGKNLNNKKNGSHDLFDRQWDMRKITNEGKSYKLSPDRKKAKVALVDSGVNSSHTDLKSINKIVNEVPKNGFRGSENDESGNKNFEEDKLNHGTLVAGQIGANGNLKGVNPGVEMNVYRVFGSKKSEMLWVSKGIIDAANDDNDVINVSLGNYLIKDNQNKKKLRDDEKVDYDALQKAINYAQKKGSIVVAAVGNDGINVKKVKEINKKRNLNSKTSKKVYDSPANLNNVMTVGSIDDNDYISEFSNYGNNFIDLMTIGGSYKLLDKYGKDAWLEKGYMQKQSVLSTSSNGRYIYQSGTSLAAPKVSGALALEIDKYQLKDQPETAIELFKKKGIEKEKYMDKKHYGNGKLDVYKLLKE</sequence>
<gene>
    <name type="primary">epiP</name>
</gene>
<comment type="function">
    <text evidence="3">Protease which cleaves the matured lantibiotic from the modified prepeptide.</text>
</comment>
<comment type="pathway">
    <text>Antibiotic biosynthesis; epidermin biosynthesis.</text>
</comment>
<comment type="similarity">
    <text evidence="3">Belongs to the peptidase S8 family.</text>
</comment>
<proteinExistence type="inferred from homology"/>
<dbReference type="EC" id="3.4.21.-"/>
<dbReference type="EMBL" id="X62386">
    <property type="protein sequence ID" value="CAA44257.1"/>
    <property type="molecule type" value="Genomic_DNA"/>
</dbReference>
<dbReference type="PIR" id="S23420">
    <property type="entry name" value="S23420"/>
</dbReference>
<dbReference type="RefSeq" id="WP_340129467.1">
    <property type="nucleotide sequence ID" value="NZ_JBBLOV010000015.1"/>
</dbReference>
<dbReference type="SMR" id="P30199"/>
<dbReference type="MEROPS" id="S08.060"/>
<dbReference type="UniPathway" id="UPA00773"/>
<dbReference type="GO" id="GO:0004252">
    <property type="term" value="F:serine-type endopeptidase activity"/>
    <property type="evidence" value="ECO:0007669"/>
    <property type="project" value="InterPro"/>
</dbReference>
<dbReference type="GO" id="GO:0006508">
    <property type="term" value="P:proteolysis"/>
    <property type="evidence" value="ECO:0007669"/>
    <property type="project" value="UniProtKB-KW"/>
</dbReference>
<dbReference type="CDD" id="cd07482">
    <property type="entry name" value="Peptidases_S8_Lantibiotic_specific_protease"/>
    <property type="match status" value="1"/>
</dbReference>
<dbReference type="Gene3D" id="3.30.70.80">
    <property type="entry name" value="Peptidase S8 propeptide/proteinase inhibitor I9"/>
    <property type="match status" value="1"/>
</dbReference>
<dbReference type="Gene3D" id="3.40.50.200">
    <property type="entry name" value="Peptidase S8/S53 domain"/>
    <property type="match status" value="1"/>
</dbReference>
<dbReference type="InterPro" id="IPR055070">
    <property type="entry name" value="EpiP_N"/>
</dbReference>
<dbReference type="InterPro" id="IPR008357">
    <property type="entry name" value="Lanit_process"/>
</dbReference>
<dbReference type="InterPro" id="IPR000209">
    <property type="entry name" value="Peptidase_S8/S53_dom"/>
</dbReference>
<dbReference type="InterPro" id="IPR036852">
    <property type="entry name" value="Peptidase_S8/S53_dom_sf"/>
</dbReference>
<dbReference type="InterPro" id="IPR023827">
    <property type="entry name" value="Peptidase_S8_Asp-AS"/>
</dbReference>
<dbReference type="InterPro" id="IPR022398">
    <property type="entry name" value="Peptidase_S8_His-AS"/>
</dbReference>
<dbReference type="InterPro" id="IPR023828">
    <property type="entry name" value="Peptidase_S8_Ser-AS"/>
</dbReference>
<dbReference type="InterPro" id="IPR050131">
    <property type="entry name" value="Peptidase_S8_subtilisin-like"/>
</dbReference>
<dbReference type="InterPro" id="IPR015500">
    <property type="entry name" value="Peptidase_S8_subtilisin-rel"/>
</dbReference>
<dbReference type="InterPro" id="IPR037045">
    <property type="entry name" value="S8pro/Inhibitor_I9_sf"/>
</dbReference>
<dbReference type="PANTHER" id="PTHR43806:SF11">
    <property type="entry name" value="CEREVISIN-RELATED"/>
    <property type="match status" value="1"/>
</dbReference>
<dbReference type="PANTHER" id="PTHR43806">
    <property type="entry name" value="PEPTIDASE S8"/>
    <property type="match status" value="1"/>
</dbReference>
<dbReference type="Pfam" id="PF00082">
    <property type="entry name" value="Peptidase_S8"/>
    <property type="match status" value="1"/>
</dbReference>
<dbReference type="Pfam" id="PF22386">
    <property type="entry name" value="PPI"/>
    <property type="match status" value="1"/>
</dbReference>
<dbReference type="PIRSF" id="PIRSF037875">
    <property type="entry name" value="Peptidase_S8_lp"/>
    <property type="match status" value="1"/>
</dbReference>
<dbReference type="PRINTS" id="PR01779">
    <property type="entry name" value="LANTIPROCESS"/>
</dbReference>
<dbReference type="PRINTS" id="PR00723">
    <property type="entry name" value="SUBTILISIN"/>
</dbReference>
<dbReference type="SUPFAM" id="SSF52743">
    <property type="entry name" value="Subtilisin-like"/>
    <property type="match status" value="1"/>
</dbReference>
<dbReference type="PROSITE" id="PS51892">
    <property type="entry name" value="SUBTILASE"/>
    <property type="match status" value="1"/>
</dbReference>
<dbReference type="PROSITE" id="PS00136">
    <property type="entry name" value="SUBTILASE_ASP"/>
    <property type="match status" value="1"/>
</dbReference>
<dbReference type="PROSITE" id="PS00137">
    <property type="entry name" value="SUBTILASE_HIS"/>
    <property type="match status" value="1"/>
</dbReference>
<dbReference type="PROSITE" id="PS00138">
    <property type="entry name" value="SUBTILASE_SER"/>
    <property type="match status" value="1"/>
</dbReference>
<feature type="signal peptide" evidence="1">
    <location>
        <begin position="1"/>
        <end position="23"/>
    </location>
</feature>
<feature type="propeptide" id="PRO_0000027016" evidence="1">
    <location>
        <begin position="24"/>
        <end status="unknown"/>
    </location>
</feature>
<feature type="chain" id="PRO_0000027017" description="Epidermin leader peptide-processing serine protease EpiP">
    <location>
        <begin status="unknown"/>
        <end position="461"/>
    </location>
</feature>
<feature type="domain" description="Peptidase S8" evidence="2">
    <location>
        <begin position="121"/>
        <end position="459"/>
    </location>
</feature>
<feature type="active site" description="Charge relay system" evidence="2">
    <location>
        <position position="149"/>
    </location>
</feature>
<feature type="active site" description="Charge relay system" evidence="2">
    <location>
        <position position="194"/>
    </location>
</feature>
<feature type="active site" description="Charge relay system" evidence="2">
    <location>
        <position position="402"/>
    </location>
</feature>
<name>EPIP_STAEP</name>
<evidence type="ECO:0000255" key="1"/>
<evidence type="ECO:0000255" key="2">
    <source>
        <dbReference type="PROSITE-ProRule" id="PRU01240"/>
    </source>
</evidence>
<evidence type="ECO:0000305" key="3"/>
<organism>
    <name type="scientific">Staphylococcus epidermidis</name>
    <dbReference type="NCBI Taxonomy" id="1282"/>
    <lineage>
        <taxon>Bacteria</taxon>
        <taxon>Bacillati</taxon>
        <taxon>Bacillota</taxon>
        <taxon>Bacilli</taxon>
        <taxon>Bacillales</taxon>
        <taxon>Staphylococcaceae</taxon>
        <taxon>Staphylococcus</taxon>
    </lineage>
</organism>
<reference key="1">
    <citation type="journal article" date="1992" name="Eur. J. Biochem.">
        <title>Analysis of genes involved in the biosynthesis of lantibiotic epidermin.</title>
        <authorList>
            <person name="Schnell N."/>
            <person name="Engelke G."/>
            <person name="Augustin J."/>
            <person name="Rosenstein R."/>
            <person name="Ungermann V."/>
            <person name="Goetz F."/>
            <person name="Entian K.-D."/>
        </authorList>
    </citation>
    <scope>NUCLEOTIDE SEQUENCE [GENOMIC DNA]</scope>
    <source>
        <strain>TU 3298 / DSM 3095</strain>
    </source>
</reference>
<keyword id="KW-0378">Hydrolase</keyword>
<keyword id="KW-0614">Plasmid</keyword>
<keyword id="KW-0645">Protease</keyword>
<keyword id="KW-0720">Serine protease</keyword>
<keyword id="KW-0732">Signal</keyword>
<keyword id="KW-0865">Zymogen</keyword>
<protein>
    <recommendedName>
        <fullName>Epidermin leader peptide-processing serine protease EpiP</fullName>
        <ecNumber>3.4.21.-</ecNumber>
    </recommendedName>
</protein>
<geneLocation type="plasmid">
    <name>pTu 32</name>
</geneLocation>